<organism>
    <name type="scientific">Artemia franciscana</name>
    <name type="common">Brine shrimp</name>
    <name type="synonym">Artemia sanfranciscana</name>
    <dbReference type="NCBI Taxonomy" id="6661"/>
    <lineage>
        <taxon>Eukaryota</taxon>
        <taxon>Metazoa</taxon>
        <taxon>Ecdysozoa</taxon>
        <taxon>Arthropoda</taxon>
        <taxon>Crustacea</taxon>
        <taxon>Branchiopoda</taxon>
        <taxon>Anostraca</taxon>
        <taxon>Artemiidae</taxon>
        <taxon>Artemia</taxon>
    </lineage>
</organism>
<proteinExistence type="inferred from homology"/>
<name>COX2_ARTSF</name>
<reference key="1">
    <citation type="journal article" date="1994" name="J. Mol. Evol.">
        <title>Speciation in the Artemia genus: mitochondrial DNA analysis of bisexual and parthenogenetic brine shrimps.</title>
        <authorList>
            <person name="Perez M.L."/>
            <person name="Valverde J.R."/>
            <person name="Batuecas B."/>
            <person name="Amat F."/>
            <person name="Marco R."/>
            <person name="Garesse R."/>
        </authorList>
    </citation>
    <scope>NUCLEOTIDE SEQUENCE [GENOMIC DNA]</scope>
</reference>
<geneLocation type="mitochondrion"/>
<comment type="function">
    <text evidence="1">Component of the cytochrome c oxidase, the last enzyme in the mitochondrial electron transport chain which drives oxidative phosphorylation. The respiratory chain contains 3 multisubunit complexes succinate dehydrogenase (complex II, CII), ubiquinol-cytochrome c oxidoreductase (cytochrome b-c1 complex, complex III, CIII) and cytochrome c oxidase (complex IV, CIV), that cooperate to transfer electrons derived from NADH and succinate to molecular oxygen, creating an electrochemical gradient over the inner membrane that drives transmembrane transport and the ATP synthase. Cytochrome c oxidase is the component of the respiratory chain that catalyzes the reduction of oxygen to water. Electrons originating from reduced cytochrome c in the intermembrane space (IMS) are transferred via the dinuclear copper A center (CU(A)) of subunit 2 and heme A of subunit 1 to the active site in subunit 1, a binuclear center (BNC) formed by heme A3 and copper B (CU(B)). The BNC reduces molecular oxygen to 2 water molecules using 4 electrons from cytochrome c in the IMS and 4 protons from the mitochondrial matrix.</text>
</comment>
<comment type="catalytic activity">
    <reaction evidence="1">
        <text>4 Fe(II)-[cytochrome c] + O2 + 8 H(+)(in) = 4 Fe(III)-[cytochrome c] + 2 H2O + 4 H(+)(out)</text>
        <dbReference type="Rhea" id="RHEA:11436"/>
        <dbReference type="Rhea" id="RHEA-COMP:10350"/>
        <dbReference type="Rhea" id="RHEA-COMP:14399"/>
        <dbReference type="ChEBI" id="CHEBI:15377"/>
        <dbReference type="ChEBI" id="CHEBI:15378"/>
        <dbReference type="ChEBI" id="CHEBI:15379"/>
        <dbReference type="ChEBI" id="CHEBI:29033"/>
        <dbReference type="ChEBI" id="CHEBI:29034"/>
        <dbReference type="EC" id="7.1.1.9"/>
    </reaction>
    <physiologicalReaction direction="left-to-right" evidence="1">
        <dbReference type="Rhea" id="RHEA:11437"/>
    </physiologicalReaction>
</comment>
<comment type="cofactor">
    <cofactor evidence="1">
        <name>Cu cation</name>
        <dbReference type="ChEBI" id="CHEBI:23378"/>
    </cofactor>
    <text evidence="1">Binds a dinuclear copper A center per subunit.</text>
</comment>
<comment type="subunit">
    <text evidence="1">Component of the cytochrome c oxidase (complex IV, CIV), a multisubunit enzyme composed of a catalytic core of 3 subunits and several supernumerary subunits. The complex exists as a monomer or a dimer and forms supercomplexes (SCs) in the inner mitochondrial membrane with ubiquinol-cytochrome c oxidoreductase (cytochrome b-c1 complex, complex III, CIII).</text>
</comment>
<comment type="subcellular location">
    <subcellularLocation>
        <location evidence="1">Mitochondrion inner membrane</location>
        <topology evidence="1">Multi-pass membrane protein</topology>
    </subcellularLocation>
</comment>
<comment type="similarity">
    <text evidence="3">Belongs to the cytochrome c oxidase subunit 2 family.</text>
</comment>
<feature type="chain" id="PRO_0000183503" description="Cytochrome c oxidase subunit 2">
    <location>
        <begin position="1"/>
        <end position="228"/>
    </location>
</feature>
<feature type="topological domain" description="Mitochondrial intermembrane" evidence="2">
    <location>
        <begin position="1"/>
        <end position="26"/>
    </location>
</feature>
<feature type="transmembrane region" description="Helical" evidence="2">
    <location>
        <begin position="27"/>
        <end position="48"/>
    </location>
</feature>
<feature type="topological domain" description="Mitochondrial matrix" evidence="2">
    <location>
        <begin position="49"/>
        <end position="62"/>
    </location>
</feature>
<feature type="transmembrane region" description="Helical" evidence="2">
    <location>
        <begin position="63"/>
        <end position="82"/>
    </location>
</feature>
<feature type="topological domain" description="Mitochondrial intermembrane" evidence="2">
    <location>
        <begin position="83"/>
        <end position="228"/>
    </location>
</feature>
<feature type="binding site" evidence="1">
    <location>
        <position position="161"/>
    </location>
    <ligand>
        <name>Cu cation</name>
        <dbReference type="ChEBI" id="CHEBI:23378"/>
        <label>A1</label>
    </ligand>
</feature>
<feature type="binding site" evidence="1">
    <location>
        <position position="196"/>
    </location>
    <ligand>
        <name>Cu cation</name>
        <dbReference type="ChEBI" id="CHEBI:23378"/>
        <label>A1</label>
    </ligand>
</feature>
<feature type="binding site" evidence="1">
    <location>
        <position position="196"/>
    </location>
    <ligand>
        <name>Cu cation</name>
        <dbReference type="ChEBI" id="CHEBI:23378"/>
        <label>A2</label>
    </ligand>
</feature>
<feature type="binding site" evidence="1">
    <location>
        <position position="198"/>
    </location>
    <ligand>
        <name>Cu cation</name>
        <dbReference type="ChEBI" id="CHEBI:23378"/>
        <label>A2</label>
    </ligand>
</feature>
<feature type="binding site" evidence="1">
    <location>
        <position position="198"/>
    </location>
    <ligand>
        <name>Mg(2+)</name>
        <dbReference type="ChEBI" id="CHEBI:18420"/>
        <note>ligand shared with subunit 1</note>
    </ligand>
</feature>
<feature type="binding site" evidence="1">
    <location>
        <position position="200"/>
    </location>
    <ligand>
        <name>Cu cation</name>
        <dbReference type="ChEBI" id="CHEBI:23378"/>
        <label>A1</label>
    </ligand>
</feature>
<feature type="binding site" evidence="1">
    <location>
        <position position="200"/>
    </location>
    <ligand>
        <name>Cu cation</name>
        <dbReference type="ChEBI" id="CHEBI:23378"/>
        <label>A2</label>
    </ligand>
</feature>
<feature type="binding site" evidence="1">
    <location>
        <position position="204"/>
    </location>
    <ligand>
        <name>Cu cation</name>
        <dbReference type="ChEBI" id="CHEBI:23378"/>
        <label>A2</label>
    </ligand>
</feature>
<feature type="binding site" evidence="1">
    <location>
        <position position="207"/>
    </location>
    <ligand>
        <name>Cu cation</name>
        <dbReference type="ChEBI" id="CHEBI:23378"/>
        <label>A1</label>
    </ligand>
</feature>
<gene>
    <name type="primary">COII</name>
    <name type="synonym">CO-II</name>
</gene>
<keyword id="KW-0186">Copper</keyword>
<keyword id="KW-0249">Electron transport</keyword>
<keyword id="KW-0460">Magnesium</keyword>
<keyword id="KW-0472">Membrane</keyword>
<keyword id="KW-0479">Metal-binding</keyword>
<keyword id="KW-0496">Mitochondrion</keyword>
<keyword id="KW-0999">Mitochondrion inner membrane</keyword>
<keyword id="KW-0679">Respiratory chain</keyword>
<keyword id="KW-1278">Translocase</keyword>
<keyword id="KW-0812">Transmembrane</keyword>
<keyword id="KW-1133">Transmembrane helix</keyword>
<keyword id="KW-0813">Transport</keyword>
<evidence type="ECO:0000250" key="1">
    <source>
        <dbReference type="UniProtKB" id="P00410"/>
    </source>
</evidence>
<evidence type="ECO:0000255" key="2"/>
<evidence type="ECO:0000305" key="3"/>
<sequence>MSQWFQLGLQNGNSPLMEQLIFFHDHALLVVILITSLVGFFLAALFSNKFLHRYLLDGQAIETVWTVIPAIILVAIALPSIRLLYLIDEIHNPALTIKVTGHQWYWSYEYSDLNDIQFDSYMIPSNELSTGMYRLLDVDNRSQCPMIKAIRLMITSDAVLHSWAVPSLGIKMDADPGRLNQSSLLVNMPGVFYGQCSEICGSGHSFMPIVIEAVGESDFLKWLELQIS</sequence>
<accession>Q37706</accession>
<protein>
    <recommendedName>
        <fullName>Cytochrome c oxidase subunit 2</fullName>
        <ecNumber>7.1.1.9</ecNumber>
    </recommendedName>
    <alternativeName>
        <fullName>Cytochrome c oxidase polypeptide II</fullName>
    </alternativeName>
</protein>
<dbReference type="EC" id="7.1.1.9"/>
<dbReference type="EMBL" id="X69067">
    <property type="protein sequence ID" value="CAA48807.1"/>
    <property type="molecule type" value="Genomic_DNA"/>
</dbReference>
<dbReference type="PIR" id="S60639">
    <property type="entry name" value="S60639"/>
</dbReference>
<dbReference type="RefSeq" id="NP_007110.1">
    <property type="nucleotide sequence ID" value="NC_001620.1"/>
</dbReference>
<dbReference type="SMR" id="Q37706"/>
<dbReference type="KEGG" id="afra:807799"/>
<dbReference type="CTD" id="4513"/>
<dbReference type="GO" id="GO:0005743">
    <property type="term" value="C:mitochondrial inner membrane"/>
    <property type="evidence" value="ECO:0007669"/>
    <property type="project" value="UniProtKB-SubCell"/>
</dbReference>
<dbReference type="GO" id="GO:0005507">
    <property type="term" value="F:copper ion binding"/>
    <property type="evidence" value="ECO:0007669"/>
    <property type="project" value="InterPro"/>
</dbReference>
<dbReference type="GO" id="GO:0004129">
    <property type="term" value="F:cytochrome-c oxidase activity"/>
    <property type="evidence" value="ECO:0007669"/>
    <property type="project" value="UniProtKB-EC"/>
</dbReference>
<dbReference type="GO" id="GO:0042773">
    <property type="term" value="P:ATP synthesis coupled electron transport"/>
    <property type="evidence" value="ECO:0007669"/>
    <property type="project" value="TreeGrafter"/>
</dbReference>
<dbReference type="CDD" id="cd13912">
    <property type="entry name" value="CcO_II_C"/>
    <property type="match status" value="1"/>
</dbReference>
<dbReference type="FunFam" id="1.10.287.90:FF:000001">
    <property type="entry name" value="Cytochrome c oxidase subunit 2"/>
    <property type="match status" value="1"/>
</dbReference>
<dbReference type="FunFam" id="2.60.40.420:FF:000001">
    <property type="entry name" value="Cytochrome c oxidase subunit 2"/>
    <property type="match status" value="1"/>
</dbReference>
<dbReference type="Gene3D" id="1.10.287.90">
    <property type="match status" value="1"/>
</dbReference>
<dbReference type="Gene3D" id="2.60.40.420">
    <property type="entry name" value="Cupredoxins - blue copper proteins"/>
    <property type="match status" value="1"/>
</dbReference>
<dbReference type="InterPro" id="IPR045187">
    <property type="entry name" value="CcO_II"/>
</dbReference>
<dbReference type="InterPro" id="IPR002429">
    <property type="entry name" value="CcO_II-like_C"/>
</dbReference>
<dbReference type="InterPro" id="IPR034210">
    <property type="entry name" value="CcO_II_C"/>
</dbReference>
<dbReference type="InterPro" id="IPR001505">
    <property type="entry name" value="Copper_CuA"/>
</dbReference>
<dbReference type="InterPro" id="IPR008972">
    <property type="entry name" value="Cupredoxin"/>
</dbReference>
<dbReference type="InterPro" id="IPR014222">
    <property type="entry name" value="Cyt_c_oxidase_su2"/>
</dbReference>
<dbReference type="InterPro" id="IPR011759">
    <property type="entry name" value="Cyt_c_oxidase_su2_TM_dom"/>
</dbReference>
<dbReference type="InterPro" id="IPR036257">
    <property type="entry name" value="Cyt_c_oxidase_su2_TM_sf"/>
</dbReference>
<dbReference type="NCBIfam" id="TIGR02866">
    <property type="entry name" value="CoxB"/>
    <property type="match status" value="1"/>
</dbReference>
<dbReference type="PANTHER" id="PTHR22888:SF9">
    <property type="entry name" value="CYTOCHROME C OXIDASE SUBUNIT 2"/>
    <property type="match status" value="1"/>
</dbReference>
<dbReference type="PANTHER" id="PTHR22888">
    <property type="entry name" value="CYTOCHROME C OXIDASE, SUBUNIT II"/>
    <property type="match status" value="1"/>
</dbReference>
<dbReference type="Pfam" id="PF00116">
    <property type="entry name" value="COX2"/>
    <property type="match status" value="1"/>
</dbReference>
<dbReference type="Pfam" id="PF02790">
    <property type="entry name" value="COX2_TM"/>
    <property type="match status" value="1"/>
</dbReference>
<dbReference type="PRINTS" id="PR01166">
    <property type="entry name" value="CYCOXIDASEII"/>
</dbReference>
<dbReference type="SUPFAM" id="SSF49503">
    <property type="entry name" value="Cupredoxins"/>
    <property type="match status" value="1"/>
</dbReference>
<dbReference type="SUPFAM" id="SSF81464">
    <property type="entry name" value="Cytochrome c oxidase subunit II-like, transmembrane region"/>
    <property type="match status" value="1"/>
</dbReference>
<dbReference type="PROSITE" id="PS00078">
    <property type="entry name" value="COX2"/>
    <property type="match status" value="1"/>
</dbReference>
<dbReference type="PROSITE" id="PS50857">
    <property type="entry name" value="COX2_CUA"/>
    <property type="match status" value="1"/>
</dbReference>
<dbReference type="PROSITE" id="PS50999">
    <property type="entry name" value="COX2_TM"/>
    <property type="match status" value="1"/>
</dbReference>